<evidence type="ECO:0000255" key="1">
    <source>
        <dbReference type="HAMAP-Rule" id="MF_01328"/>
    </source>
</evidence>
<evidence type="ECO:0000256" key="2">
    <source>
        <dbReference type="SAM" id="MobiDB-lite"/>
    </source>
</evidence>
<evidence type="ECO:0000305" key="3"/>
<proteinExistence type="inferred from homology"/>
<comment type="function">
    <text evidence="1">One of the primary rRNA binding proteins, this protein initially binds near the 5'-end of the 23S rRNA. It is important during the early stages of 50S assembly. It makes multiple contacts with different domains of the 23S rRNA in the assembled 50S subunit and ribosome.</text>
</comment>
<comment type="function">
    <text evidence="1">Forms part of the polypeptide exit tunnel.</text>
</comment>
<comment type="subunit">
    <text evidence="1">Part of the 50S ribosomal subunit.</text>
</comment>
<comment type="similarity">
    <text evidence="1">Belongs to the universal ribosomal protein uL4 family.</text>
</comment>
<sequence length="208" mass="23310">MPKVDVYDINGKVVGEINLRDDIFGIEVNKHAIHQVIVNQLANRRQGTQSTKTKSEVRGGGRKPWRQKGTGRARHGSIRSAQWVKGGIALGPKPRSYKYAVPKKLRRLALKSALSSKVNENELLVLDSLNFDEIKTKQMANVLKNLKVNDTTAVLVLADKNRNVELSARNIPGLKTLFVNTMNVYDIIRHDKFIITKDAVAKVEEVYA</sequence>
<accession>A3DJH3</accession>
<dbReference type="EMBL" id="CP000568">
    <property type="protein sequence ID" value="ABN54102.1"/>
    <property type="molecule type" value="Genomic_DNA"/>
</dbReference>
<dbReference type="RefSeq" id="WP_003514623.1">
    <property type="nucleotide sequence ID" value="NC_009012.1"/>
</dbReference>
<dbReference type="SMR" id="A3DJH3"/>
<dbReference type="STRING" id="203119.Cthe_2904"/>
<dbReference type="GeneID" id="35805108"/>
<dbReference type="KEGG" id="cth:Cthe_2904"/>
<dbReference type="eggNOG" id="COG0088">
    <property type="taxonomic scope" value="Bacteria"/>
</dbReference>
<dbReference type="HOGENOM" id="CLU_041575_5_2_9"/>
<dbReference type="OrthoDB" id="9803201at2"/>
<dbReference type="Proteomes" id="UP000002145">
    <property type="component" value="Chromosome"/>
</dbReference>
<dbReference type="GO" id="GO:1990904">
    <property type="term" value="C:ribonucleoprotein complex"/>
    <property type="evidence" value="ECO:0007669"/>
    <property type="project" value="UniProtKB-KW"/>
</dbReference>
<dbReference type="GO" id="GO:0005840">
    <property type="term" value="C:ribosome"/>
    <property type="evidence" value="ECO:0007669"/>
    <property type="project" value="UniProtKB-KW"/>
</dbReference>
<dbReference type="GO" id="GO:0019843">
    <property type="term" value="F:rRNA binding"/>
    <property type="evidence" value="ECO:0007669"/>
    <property type="project" value="UniProtKB-UniRule"/>
</dbReference>
<dbReference type="GO" id="GO:0003735">
    <property type="term" value="F:structural constituent of ribosome"/>
    <property type="evidence" value="ECO:0007669"/>
    <property type="project" value="InterPro"/>
</dbReference>
<dbReference type="GO" id="GO:0006412">
    <property type="term" value="P:translation"/>
    <property type="evidence" value="ECO:0007669"/>
    <property type="project" value="UniProtKB-UniRule"/>
</dbReference>
<dbReference type="Gene3D" id="3.40.1370.10">
    <property type="match status" value="1"/>
</dbReference>
<dbReference type="HAMAP" id="MF_01328_B">
    <property type="entry name" value="Ribosomal_uL4_B"/>
    <property type="match status" value="1"/>
</dbReference>
<dbReference type="InterPro" id="IPR002136">
    <property type="entry name" value="Ribosomal_uL4"/>
</dbReference>
<dbReference type="InterPro" id="IPR013005">
    <property type="entry name" value="Ribosomal_uL4-like"/>
</dbReference>
<dbReference type="InterPro" id="IPR023574">
    <property type="entry name" value="Ribosomal_uL4_dom_sf"/>
</dbReference>
<dbReference type="NCBIfam" id="TIGR03953">
    <property type="entry name" value="rplD_bact"/>
    <property type="match status" value="1"/>
</dbReference>
<dbReference type="PANTHER" id="PTHR10746">
    <property type="entry name" value="50S RIBOSOMAL PROTEIN L4"/>
    <property type="match status" value="1"/>
</dbReference>
<dbReference type="PANTHER" id="PTHR10746:SF6">
    <property type="entry name" value="LARGE RIBOSOMAL SUBUNIT PROTEIN UL4M"/>
    <property type="match status" value="1"/>
</dbReference>
<dbReference type="Pfam" id="PF00573">
    <property type="entry name" value="Ribosomal_L4"/>
    <property type="match status" value="1"/>
</dbReference>
<dbReference type="SUPFAM" id="SSF52166">
    <property type="entry name" value="Ribosomal protein L4"/>
    <property type="match status" value="1"/>
</dbReference>
<protein>
    <recommendedName>
        <fullName evidence="1">Large ribosomal subunit protein uL4</fullName>
    </recommendedName>
    <alternativeName>
        <fullName evidence="3">50S ribosomal protein L4</fullName>
    </alternativeName>
</protein>
<gene>
    <name evidence="1" type="primary">rplD</name>
    <name type="ordered locus">Cthe_2904</name>
</gene>
<feature type="chain" id="PRO_1000052388" description="Large ribosomal subunit protein uL4">
    <location>
        <begin position="1"/>
        <end position="208"/>
    </location>
</feature>
<feature type="region of interest" description="Disordered" evidence="2">
    <location>
        <begin position="44"/>
        <end position="76"/>
    </location>
</feature>
<feature type="compositionally biased region" description="Basic residues" evidence="2">
    <location>
        <begin position="60"/>
        <end position="76"/>
    </location>
</feature>
<organism>
    <name type="scientific">Acetivibrio thermocellus (strain ATCC 27405 / DSM 1237 / JCM 9322 / NBRC 103400 / NCIMB 10682 / NRRL B-4536 / VPI 7372)</name>
    <name type="common">Clostridium thermocellum</name>
    <dbReference type="NCBI Taxonomy" id="203119"/>
    <lineage>
        <taxon>Bacteria</taxon>
        <taxon>Bacillati</taxon>
        <taxon>Bacillota</taxon>
        <taxon>Clostridia</taxon>
        <taxon>Eubacteriales</taxon>
        <taxon>Oscillospiraceae</taxon>
        <taxon>Acetivibrio</taxon>
    </lineage>
</organism>
<reference key="1">
    <citation type="submission" date="2007-02" db="EMBL/GenBank/DDBJ databases">
        <title>Complete sequence of Clostridium thermocellum ATCC 27405.</title>
        <authorList>
            <consortium name="US DOE Joint Genome Institute"/>
            <person name="Copeland A."/>
            <person name="Lucas S."/>
            <person name="Lapidus A."/>
            <person name="Barry K."/>
            <person name="Detter J.C."/>
            <person name="Glavina del Rio T."/>
            <person name="Hammon N."/>
            <person name="Israni S."/>
            <person name="Dalin E."/>
            <person name="Tice H."/>
            <person name="Pitluck S."/>
            <person name="Chertkov O."/>
            <person name="Brettin T."/>
            <person name="Bruce D."/>
            <person name="Han C."/>
            <person name="Tapia R."/>
            <person name="Gilna P."/>
            <person name="Schmutz J."/>
            <person name="Larimer F."/>
            <person name="Land M."/>
            <person name="Hauser L."/>
            <person name="Kyrpides N."/>
            <person name="Mikhailova N."/>
            <person name="Wu J.H.D."/>
            <person name="Newcomb M."/>
            <person name="Richardson P."/>
        </authorList>
    </citation>
    <scope>NUCLEOTIDE SEQUENCE [LARGE SCALE GENOMIC DNA]</scope>
    <source>
        <strain>ATCC 27405 / DSM 1237 / JCM 9322 / NBRC 103400 / NCIMB 10682 / NRRL B-4536 / VPI 7372</strain>
    </source>
</reference>
<name>RL4_ACET2</name>
<keyword id="KW-1185">Reference proteome</keyword>
<keyword id="KW-0687">Ribonucleoprotein</keyword>
<keyword id="KW-0689">Ribosomal protein</keyword>
<keyword id="KW-0694">RNA-binding</keyword>
<keyword id="KW-0699">rRNA-binding</keyword>